<reference key="1">
    <citation type="journal article" date="2002" name="Proc. Natl. Acad. Sci. U.S.A.">
        <title>Extensive mosaic structure revealed by the complete genome sequence of uropathogenic Escherichia coli.</title>
        <authorList>
            <person name="Welch R.A."/>
            <person name="Burland V."/>
            <person name="Plunkett G. III"/>
            <person name="Redford P."/>
            <person name="Roesch P."/>
            <person name="Rasko D."/>
            <person name="Buckles E.L."/>
            <person name="Liou S.-R."/>
            <person name="Boutin A."/>
            <person name="Hackett J."/>
            <person name="Stroud D."/>
            <person name="Mayhew G.F."/>
            <person name="Rose D.J."/>
            <person name="Zhou S."/>
            <person name="Schwartz D.C."/>
            <person name="Perna N.T."/>
            <person name="Mobley H.L.T."/>
            <person name="Donnenberg M.S."/>
            <person name="Blattner F.R."/>
        </authorList>
    </citation>
    <scope>NUCLEOTIDE SEQUENCE [LARGE SCALE GENOMIC DNA]</scope>
    <source>
        <strain>CFT073 / ATCC 700928 / UPEC</strain>
    </source>
</reference>
<comment type="function">
    <text evidence="2">Catalyzes the oxidative phosphorylation of glyceraldehyde 3-phosphate (G3P) to 1,3-bisphosphoglycerate (BPG) using the cofactor NAD. The first reaction step involves the formation of a hemiacetal intermediate between G3P and a cysteine residue, and this hemiacetal intermediate is then oxidized to a thioester, with concomitant reduction of NAD to NADH. The reduced NADH is then exchanged with the second NAD, and the thioester is attacked by a nucleophilic inorganic phosphate to produce BPG.</text>
</comment>
<comment type="catalytic activity">
    <reaction evidence="2">
        <text>D-glyceraldehyde 3-phosphate + phosphate + NAD(+) = (2R)-3-phospho-glyceroyl phosphate + NADH + H(+)</text>
        <dbReference type="Rhea" id="RHEA:10300"/>
        <dbReference type="ChEBI" id="CHEBI:15378"/>
        <dbReference type="ChEBI" id="CHEBI:43474"/>
        <dbReference type="ChEBI" id="CHEBI:57540"/>
        <dbReference type="ChEBI" id="CHEBI:57604"/>
        <dbReference type="ChEBI" id="CHEBI:57945"/>
        <dbReference type="ChEBI" id="CHEBI:59776"/>
        <dbReference type="EC" id="1.2.1.12"/>
    </reaction>
</comment>
<comment type="pathway">
    <text evidence="3">Carbohydrate degradation; glycolysis; pyruvate from D-glyceraldehyde 3-phosphate: step 1/5.</text>
</comment>
<comment type="subunit">
    <text evidence="2">Homotetramer.</text>
</comment>
<comment type="subcellular location">
    <subcellularLocation>
        <location evidence="3">Cytoplasm</location>
    </subcellularLocation>
</comment>
<comment type="similarity">
    <text evidence="3">Belongs to the glyceraldehyde-3-phosphate dehydrogenase family.</text>
</comment>
<comment type="sequence caution" evidence="3">
    <conflict type="erroneous initiation">
        <sequence resource="EMBL-CDS" id="AAN80643"/>
    </conflict>
    <text>Extended N-terminus.</text>
</comment>
<sequence>MTIKVGINGFGRIGRIVFRAAQKRSDIEIVAINDLLDADYMAYMLKYDSTHGRFDGTVEVKDGHLIVNGKKIRVTAERDPANLKWDEVGVDVVAEATGLFLTDETARKHITAGAKKVVMTGPSKDNTPMFVKGANFDKYAGQDIVSNASCTTNCLAPLAKVINDNFGIIEGLMTTVHATTATQKTVDGPSHKDWRGGRGASQNIIPSSTGAAKAVGKVLPELNGKLTGMAFRVPTPNVSVVDLTVRLEKAATYEQIKAAVKAAAEGEMKGVLGYTEDDVVSTDFNGEVCTSVFDAKAGIALNDNFVKLVSWYDNETGYSNKVLDLIAHISK</sequence>
<feature type="initiator methionine" description="Removed" evidence="1">
    <location>
        <position position="1"/>
    </location>
</feature>
<feature type="chain" id="PRO_0000145654" description="Glyceraldehyde-3-phosphate dehydrogenase">
    <location>
        <begin position="2"/>
        <end position="331"/>
    </location>
</feature>
<feature type="active site" description="Nucleophile" evidence="2">
    <location>
        <position position="150"/>
    </location>
</feature>
<feature type="binding site" evidence="2">
    <location>
        <begin position="12"/>
        <end position="13"/>
    </location>
    <ligand>
        <name>NAD(+)</name>
        <dbReference type="ChEBI" id="CHEBI:57540"/>
    </ligand>
</feature>
<feature type="binding site" evidence="2">
    <location>
        <position position="34"/>
    </location>
    <ligand>
        <name>NAD(+)</name>
        <dbReference type="ChEBI" id="CHEBI:57540"/>
    </ligand>
</feature>
<feature type="binding site" evidence="2">
    <location>
        <position position="78"/>
    </location>
    <ligand>
        <name>NAD(+)</name>
        <dbReference type="ChEBI" id="CHEBI:57540"/>
    </ligand>
</feature>
<feature type="binding site" evidence="2">
    <location>
        <position position="120"/>
    </location>
    <ligand>
        <name>NAD(+)</name>
        <dbReference type="ChEBI" id="CHEBI:57540"/>
    </ligand>
</feature>
<feature type="binding site" evidence="2">
    <location>
        <begin position="149"/>
        <end position="151"/>
    </location>
    <ligand>
        <name>D-glyceraldehyde 3-phosphate</name>
        <dbReference type="ChEBI" id="CHEBI:59776"/>
    </ligand>
</feature>
<feature type="binding site" evidence="2">
    <location>
        <position position="180"/>
    </location>
    <ligand>
        <name>D-glyceraldehyde 3-phosphate</name>
        <dbReference type="ChEBI" id="CHEBI:59776"/>
    </ligand>
</feature>
<feature type="binding site" evidence="2">
    <location>
        <begin position="209"/>
        <end position="210"/>
    </location>
    <ligand>
        <name>D-glyceraldehyde 3-phosphate</name>
        <dbReference type="ChEBI" id="CHEBI:59776"/>
    </ligand>
</feature>
<feature type="binding site" evidence="2">
    <location>
        <position position="232"/>
    </location>
    <ligand>
        <name>D-glyceraldehyde 3-phosphate</name>
        <dbReference type="ChEBI" id="CHEBI:59776"/>
    </ligand>
</feature>
<feature type="binding site" evidence="2">
    <location>
        <position position="314"/>
    </location>
    <ligand>
        <name>NAD(+)</name>
        <dbReference type="ChEBI" id="CHEBI:57540"/>
    </ligand>
</feature>
<feature type="site" description="Activates thiol group during catalysis" evidence="2">
    <location>
        <position position="177"/>
    </location>
</feature>
<feature type="modified residue" description="N6-acetyllysine" evidence="2">
    <location>
        <position position="132"/>
    </location>
</feature>
<feature type="modified residue" description="N6-acetyllysine" evidence="2">
    <location>
        <position position="138"/>
    </location>
</feature>
<feature type="modified residue" description="N6-acetyllysine" evidence="2">
    <location>
        <position position="192"/>
    </location>
</feature>
<feature type="modified residue" description="N6-acetyllysine" evidence="2">
    <location>
        <position position="249"/>
    </location>
</feature>
<protein>
    <recommendedName>
        <fullName evidence="2">Glyceraldehyde-3-phosphate dehydrogenase</fullName>
        <shortName evidence="2">GAPDH</shortName>
        <ecNumber evidence="2">1.2.1.12</ecNumber>
    </recommendedName>
    <alternativeName>
        <fullName evidence="2">NAD-dependent glyceraldehyde-3-phosphate dehydrogenase</fullName>
    </alternativeName>
</protein>
<gene>
    <name type="primary">gapA</name>
    <name type="ordered locus">c2184</name>
</gene>
<keyword id="KW-0007">Acetylation</keyword>
<keyword id="KW-0963">Cytoplasm</keyword>
<keyword id="KW-0324">Glycolysis</keyword>
<keyword id="KW-0520">NAD</keyword>
<keyword id="KW-0547">Nucleotide-binding</keyword>
<keyword id="KW-0560">Oxidoreductase</keyword>
<keyword id="KW-1185">Reference proteome</keyword>
<accession>P0A9B3</accession>
<accession>P06977</accession>
<evidence type="ECO:0000250" key="1"/>
<evidence type="ECO:0000250" key="2">
    <source>
        <dbReference type="UniProtKB" id="P0A9B2"/>
    </source>
</evidence>
<evidence type="ECO:0000305" key="3"/>
<name>G3P_ECOL6</name>
<organism>
    <name type="scientific">Escherichia coli O6:H1 (strain CFT073 / ATCC 700928 / UPEC)</name>
    <dbReference type="NCBI Taxonomy" id="199310"/>
    <lineage>
        <taxon>Bacteria</taxon>
        <taxon>Pseudomonadati</taxon>
        <taxon>Pseudomonadota</taxon>
        <taxon>Gammaproteobacteria</taxon>
        <taxon>Enterobacterales</taxon>
        <taxon>Enterobacteriaceae</taxon>
        <taxon>Escherichia</taxon>
    </lineage>
</organism>
<dbReference type="EC" id="1.2.1.12" evidence="2"/>
<dbReference type="EMBL" id="AE014075">
    <property type="protein sequence ID" value="AAN80643.1"/>
    <property type="status" value="ALT_INIT"/>
    <property type="molecule type" value="Genomic_DNA"/>
</dbReference>
<dbReference type="RefSeq" id="WP_000153502.1">
    <property type="nucleotide sequence ID" value="NZ_CP051263.1"/>
</dbReference>
<dbReference type="SMR" id="P0A9B3"/>
<dbReference type="STRING" id="199310.c2184"/>
<dbReference type="GeneID" id="93775988"/>
<dbReference type="KEGG" id="ecc:c2184"/>
<dbReference type="eggNOG" id="COG0057">
    <property type="taxonomic scope" value="Bacteria"/>
</dbReference>
<dbReference type="HOGENOM" id="CLU_030140_0_3_6"/>
<dbReference type="UniPathway" id="UPA00109">
    <property type="reaction ID" value="UER00184"/>
</dbReference>
<dbReference type="Proteomes" id="UP000001410">
    <property type="component" value="Chromosome"/>
</dbReference>
<dbReference type="GO" id="GO:0005737">
    <property type="term" value="C:cytoplasm"/>
    <property type="evidence" value="ECO:0007669"/>
    <property type="project" value="UniProtKB-SubCell"/>
</dbReference>
<dbReference type="GO" id="GO:0004365">
    <property type="term" value="F:glyceraldehyde-3-phosphate dehydrogenase (NAD+) (phosphorylating) activity"/>
    <property type="evidence" value="ECO:0000250"/>
    <property type="project" value="UniProtKB"/>
</dbReference>
<dbReference type="GO" id="GO:0051287">
    <property type="term" value="F:NAD binding"/>
    <property type="evidence" value="ECO:0000250"/>
    <property type="project" value="UniProtKB"/>
</dbReference>
<dbReference type="GO" id="GO:0050661">
    <property type="term" value="F:NADP binding"/>
    <property type="evidence" value="ECO:0007669"/>
    <property type="project" value="InterPro"/>
</dbReference>
<dbReference type="GO" id="GO:0006006">
    <property type="term" value="P:glucose metabolic process"/>
    <property type="evidence" value="ECO:0007669"/>
    <property type="project" value="InterPro"/>
</dbReference>
<dbReference type="GO" id="GO:0006096">
    <property type="term" value="P:glycolytic process"/>
    <property type="evidence" value="ECO:0007669"/>
    <property type="project" value="UniProtKB-UniPathway"/>
</dbReference>
<dbReference type="CDD" id="cd18126">
    <property type="entry name" value="GAPDH_I_C"/>
    <property type="match status" value="1"/>
</dbReference>
<dbReference type="CDD" id="cd05214">
    <property type="entry name" value="GAPDH_I_N"/>
    <property type="match status" value="1"/>
</dbReference>
<dbReference type="FunFam" id="3.30.360.10:FF:000001">
    <property type="entry name" value="Glyceraldehyde-3-phosphate dehydrogenase"/>
    <property type="match status" value="1"/>
</dbReference>
<dbReference type="FunFam" id="3.40.50.720:FF:000001">
    <property type="entry name" value="Glyceraldehyde-3-phosphate dehydrogenase"/>
    <property type="match status" value="1"/>
</dbReference>
<dbReference type="Gene3D" id="3.30.360.10">
    <property type="entry name" value="Dihydrodipicolinate Reductase, domain 2"/>
    <property type="match status" value="1"/>
</dbReference>
<dbReference type="Gene3D" id="3.40.50.720">
    <property type="entry name" value="NAD(P)-binding Rossmann-like Domain"/>
    <property type="match status" value="1"/>
</dbReference>
<dbReference type="InterPro" id="IPR020831">
    <property type="entry name" value="GlycerAld/Erythrose_P_DH"/>
</dbReference>
<dbReference type="InterPro" id="IPR020830">
    <property type="entry name" value="GlycerAld_3-P_DH_AS"/>
</dbReference>
<dbReference type="InterPro" id="IPR020829">
    <property type="entry name" value="GlycerAld_3-P_DH_cat"/>
</dbReference>
<dbReference type="InterPro" id="IPR020828">
    <property type="entry name" value="GlycerAld_3-P_DH_NAD(P)-bd"/>
</dbReference>
<dbReference type="InterPro" id="IPR006424">
    <property type="entry name" value="Glyceraldehyde-3-P_DH_1"/>
</dbReference>
<dbReference type="InterPro" id="IPR036291">
    <property type="entry name" value="NAD(P)-bd_dom_sf"/>
</dbReference>
<dbReference type="NCBIfam" id="TIGR01534">
    <property type="entry name" value="GAPDH-I"/>
    <property type="match status" value="1"/>
</dbReference>
<dbReference type="NCBIfam" id="NF011954">
    <property type="entry name" value="PRK15425.1"/>
    <property type="match status" value="1"/>
</dbReference>
<dbReference type="PANTHER" id="PTHR10836">
    <property type="entry name" value="GLYCERALDEHYDE 3-PHOSPHATE DEHYDROGENASE"/>
    <property type="match status" value="1"/>
</dbReference>
<dbReference type="PANTHER" id="PTHR10836:SF76">
    <property type="entry name" value="GLYCERALDEHYDE-3-PHOSPHATE DEHYDROGENASE-RELATED"/>
    <property type="match status" value="1"/>
</dbReference>
<dbReference type="Pfam" id="PF02800">
    <property type="entry name" value="Gp_dh_C"/>
    <property type="match status" value="1"/>
</dbReference>
<dbReference type="Pfam" id="PF00044">
    <property type="entry name" value="Gp_dh_N"/>
    <property type="match status" value="1"/>
</dbReference>
<dbReference type="PIRSF" id="PIRSF000149">
    <property type="entry name" value="GAP_DH"/>
    <property type="match status" value="1"/>
</dbReference>
<dbReference type="PRINTS" id="PR00078">
    <property type="entry name" value="G3PDHDRGNASE"/>
</dbReference>
<dbReference type="SMART" id="SM00846">
    <property type="entry name" value="Gp_dh_N"/>
    <property type="match status" value="1"/>
</dbReference>
<dbReference type="SUPFAM" id="SSF55347">
    <property type="entry name" value="Glyceraldehyde-3-phosphate dehydrogenase-like, C-terminal domain"/>
    <property type="match status" value="1"/>
</dbReference>
<dbReference type="SUPFAM" id="SSF51735">
    <property type="entry name" value="NAD(P)-binding Rossmann-fold domains"/>
    <property type="match status" value="1"/>
</dbReference>
<dbReference type="PROSITE" id="PS00071">
    <property type="entry name" value="GAPDH"/>
    <property type="match status" value="1"/>
</dbReference>
<proteinExistence type="inferred from homology"/>